<comment type="function">
    <text evidence="2 9">Involved in the signal transduction pathway mediated by multiple Wnt genes (By similarity). Required during ciliogenesis for the docking of basal bodies to the apical plasma membrane.</text>
</comment>
<comment type="subcellular location">
    <subcellularLocation>
        <location evidence="1">Cytoplasm</location>
    </subcellularLocation>
</comment>
<comment type="tissue specificity">
    <text evidence="9">Expressed throughout the epidermis.</text>
</comment>
<comment type="similarity">
    <text evidence="4">Belongs to the DSH family.</text>
</comment>
<sequence>MGETKVIYHLDEQETPYLVKLPVPAEKVTLGDFKNILNKPNYKFFFKSMDDDFGVVKEEISDDNAKLPCFNGRVVCWLVSADGSQSDAGSVCADIQSDLPPPIERTGGIGDSRPPSFHPNTRGSQENLDNETETDSVVSARRERPGRKETSEHATRINGTSKMERRRDTGGYESSSTLMSSELDSTSFFDSDEDDSTSRFSNSTEQSSASRLMRRHKRRRRKPKAPQIERSSSFSSITDSTMSLNIITVTLNMEKYNFLGISIVGQSNERGDGGIYIGSIMKGGAVAADGRIEPGDMLLQVNDTNFENMSNDDAVRVLRDIVHKPGPITLTVAKCWDPSPRNCFTLPRSEPIRPIDPAAWVSHTAAMTGTYPAYGMSPSMSTITSTSSSITSSIPETERFDDFQLSIHSDMVTIVKAMSSSESGLEVRDRMWLKITIPNAFIGSDVVDWLYHHVEGFTDRREARKYASNLLKAGYIRHTVNKITFSEQCYYIFGDLCGNMANLSLNDHDGSSGTSDQDTLAPLPHPGAAPWPIAFQYQYPLPHPYSPHPGFPDPAYIYGGGSAGSQHSEGSRSSGSNRSSTEKRKDRETKGGDSKSGGSGSESDHTTRSSLRRDRAASERSVPASEHSHRSHHSIAHSIRSHHTHQSFGPPGIPPLYGAPMMMMPAPVSVMGPPGAPPSRDLASVPPELTASRQSFRMAMGNPSEFFVDVIKEFWGV</sequence>
<accession>Q6DKE2</accession>
<reference evidence="11" key="1">
    <citation type="submission" date="2004-06" db="EMBL/GenBank/DDBJ databases">
        <authorList>
            <consortium name="NIH - Xenopus Gene Collection (XGC) project"/>
        </authorList>
    </citation>
    <scope>NUCLEOTIDE SEQUENCE [LARGE SCALE MRNA]</scope>
    <source>
        <tissue evidence="11">Kidney</tissue>
    </source>
</reference>
<reference evidence="10" key="2">
    <citation type="journal article" date="2008" name="Nat. Genet.">
        <title>Dishevelled controls apical docking and planar polarization of basal bodies in ciliated epithelial cells.</title>
        <authorList>
            <person name="Park T.J."/>
            <person name="Mitchell B.J."/>
            <person name="Abitua P.B."/>
            <person name="Kintner C."/>
            <person name="Wallingford J.B."/>
        </authorList>
    </citation>
    <scope>FUNCTION</scope>
    <scope>TISSUE SPECIFICITY</scope>
</reference>
<feature type="chain" id="PRO_0000354666" description="Segment polarity protein dishevelled homolog DVL-3">
    <location>
        <begin position="1"/>
        <end position="717"/>
    </location>
</feature>
<feature type="domain" description="DIX" evidence="6">
    <location>
        <begin position="1"/>
        <end position="82"/>
    </location>
</feature>
<feature type="domain" description="PDZ" evidence="7">
    <location>
        <begin position="248"/>
        <end position="333"/>
    </location>
</feature>
<feature type="domain" description="DEP" evidence="5">
    <location>
        <begin position="421"/>
        <end position="495"/>
    </location>
</feature>
<feature type="region of interest" description="Disordered" evidence="8">
    <location>
        <begin position="89"/>
        <end position="235"/>
    </location>
</feature>
<feature type="region of interest" description="Disordered" evidence="8">
    <location>
        <begin position="552"/>
        <end position="653"/>
    </location>
</feature>
<feature type="compositionally biased region" description="Polar residues" evidence="8">
    <location>
        <begin position="118"/>
        <end position="127"/>
    </location>
</feature>
<feature type="compositionally biased region" description="Basic and acidic residues" evidence="8">
    <location>
        <begin position="140"/>
        <end position="155"/>
    </location>
</feature>
<feature type="compositionally biased region" description="Low complexity" evidence="8">
    <location>
        <begin position="173"/>
        <end position="189"/>
    </location>
</feature>
<feature type="compositionally biased region" description="Polar residues" evidence="8">
    <location>
        <begin position="199"/>
        <end position="210"/>
    </location>
</feature>
<feature type="compositionally biased region" description="Basic residues" evidence="8">
    <location>
        <begin position="212"/>
        <end position="224"/>
    </location>
</feature>
<feature type="compositionally biased region" description="Low complexity" evidence="8">
    <location>
        <begin position="564"/>
        <end position="579"/>
    </location>
</feature>
<feature type="compositionally biased region" description="Basic and acidic residues" evidence="8">
    <location>
        <begin position="580"/>
        <end position="593"/>
    </location>
</feature>
<feature type="compositionally biased region" description="Basic and acidic residues" evidence="8">
    <location>
        <begin position="602"/>
        <end position="618"/>
    </location>
</feature>
<feature type="compositionally biased region" description="Basic residues" evidence="8">
    <location>
        <begin position="629"/>
        <end position="645"/>
    </location>
</feature>
<dbReference type="EMBL" id="BC074187">
    <property type="protein sequence ID" value="AAH74187.1"/>
    <property type="molecule type" value="mRNA"/>
</dbReference>
<dbReference type="SMR" id="Q6DKE2"/>
<dbReference type="KEGG" id="xla:444527"/>
<dbReference type="AGR" id="Xenbase:XB-GENE-977365"/>
<dbReference type="CTD" id="444527"/>
<dbReference type="Xenbase" id="XB-GENE-977365">
    <property type="gene designation" value="dvl3.L"/>
</dbReference>
<dbReference type="OrthoDB" id="10031689at2759"/>
<dbReference type="Proteomes" id="UP000186698">
    <property type="component" value="Chromosome 5L"/>
</dbReference>
<dbReference type="Bgee" id="444527">
    <property type="expression patterns" value="Expressed in blastula and 19 other cell types or tissues"/>
</dbReference>
<dbReference type="GO" id="GO:0005829">
    <property type="term" value="C:cytosol"/>
    <property type="evidence" value="ECO:0000318"/>
    <property type="project" value="GO_Central"/>
</dbReference>
<dbReference type="GO" id="GO:0008013">
    <property type="term" value="F:beta-catenin binding"/>
    <property type="evidence" value="ECO:0000250"/>
    <property type="project" value="UniProtKB"/>
</dbReference>
<dbReference type="GO" id="GO:0005109">
    <property type="term" value="F:frizzled binding"/>
    <property type="evidence" value="ECO:0000318"/>
    <property type="project" value="GO_Central"/>
</dbReference>
<dbReference type="GO" id="GO:0060070">
    <property type="term" value="P:canonical Wnt signaling pathway"/>
    <property type="evidence" value="ECO:0000318"/>
    <property type="project" value="GO_Central"/>
</dbReference>
<dbReference type="GO" id="GO:0032053">
    <property type="term" value="P:ciliary basal body organization"/>
    <property type="evidence" value="ECO:0000315"/>
    <property type="project" value="UniProtKB"/>
</dbReference>
<dbReference type="GO" id="GO:0060271">
    <property type="term" value="P:cilium assembly"/>
    <property type="evidence" value="ECO:0000315"/>
    <property type="project" value="UniProtKB"/>
</dbReference>
<dbReference type="GO" id="GO:0035556">
    <property type="term" value="P:intracellular signal transduction"/>
    <property type="evidence" value="ECO:0007669"/>
    <property type="project" value="InterPro"/>
</dbReference>
<dbReference type="CDD" id="cd04438">
    <property type="entry name" value="DEP_dishevelled"/>
    <property type="match status" value="1"/>
</dbReference>
<dbReference type="CDD" id="cd06717">
    <property type="entry name" value="PDZ_Dishevelled-like"/>
    <property type="match status" value="1"/>
</dbReference>
<dbReference type="FunFam" id="2.40.240.130:FF:000001">
    <property type="entry name" value="Segment polarity protein dishevelled homolog DVL-1"/>
    <property type="match status" value="1"/>
</dbReference>
<dbReference type="FunFam" id="2.30.42.10:FF:000014">
    <property type="entry name" value="Segment polarity protein dishevelled homolog DVL-3"/>
    <property type="match status" value="1"/>
</dbReference>
<dbReference type="FunFam" id="1.10.10.10:FF:000040">
    <property type="entry name" value="segment polarity protein dishevelled homolog DVL-3"/>
    <property type="match status" value="1"/>
</dbReference>
<dbReference type="Gene3D" id="2.30.42.10">
    <property type="match status" value="1"/>
</dbReference>
<dbReference type="Gene3D" id="2.40.240.130">
    <property type="match status" value="1"/>
</dbReference>
<dbReference type="Gene3D" id="1.10.10.10">
    <property type="entry name" value="Winged helix-like DNA-binding domain superfamily/Winged helix DNA-binding domain"/>
    <property type="match status" value="1"/>
</dbReference>
<dbReference type="InterPro" id="IPR000591">
    <property type="entry name" value="DEP_dom"/>
</dbReference>
<dbReference type="InterPro" id="IPR024580">
    <property type="entry name" value="Dishevelled_C-dom"/>
</dbReference>
<dbReference type="InterPro" id="IPR008339">
    <property type="entry name" value="Dishevelled_fam"/>
</dbReference>
<dbReference type="InterPro" id="IPR003351">
    <property type="entry name" value="Dishevelled_protein_dom"/>
</dbReference>
<dbReference type="InterPro" id="IPR001158">
    <property type="entry name" value="DIX"/>
</dbReference>
<dbReference type="InterPro" id="IPR038207">
    <property type="entry name" value="DIX_dom_sf"/>
</dbReference>
<dbReference type="InterPro" id="IPR015506">
    <property type="entry name" value="Dsh/Dvl-rel"/>
</dbReference>
<dbReference type="InterPro" id="IPR001478">
    <property type="entry name" value="PDZ"/>
</dbReference>
<dbReference type="InterPro" id="IPR036034">
    <property type="entry name" value="PDZ_sf"/>
</dbReference>
<dbReference type="InterPro" id="IPR029071">
    <property type="entry name" value="Ubiquitin-like_domsf"/>
</dbReference>
<dbReference type="InterPro" id="IPR036388">
    <property type="entry name" value="WH-like_DNA-bd_sf"/>
</dbReference>
<dbReference type="InterPro" id="IPR036390">
    <property type="entry name" value="WH_DNA-bd_sf"/>
</dbReference>
<dbReference type="PANTHER" id="PTHR10878">
    <property type="entry name" value="SEGMENT POLARITY PROTEIN DISHEVELLED"/>
    <property type="match status" value="1"/>
</dbReference>
<dbReference type="PANTHER" id="PTHR10878:SF6">
    <property type="entry name" value="SEGMENT POLARITY PROTEIN DISHEVELLED HOMOLOG DVL-3"/>
    <property type="match status" value="1"/>
</dbReference>
<dbReference type="Pfam" id="PF00610">
    <property type="entry name" value="DEP"/>
    <property type="match status" value="1"/>
</dbReference>
<dbReference type="Pfam" id="PF02377">
    <property type="entry name" value="Dishevelled"/>
    <property type="match status" value="1"/>
</dbReference>
<dbReference type="Pfam" id="PF00778">
    <property type="entry name" value="DIX"/>
    <property type="match status" value="1"/>
</dbReference>
<dbReference type="Pfam" id="PF12316">
    <property type="entry name" value="Dsh_C"/>
    <property type="match status" value="1"/>
</dbReference>
<dbReference type="Pfam" id="PF00595">
    <property type="entry name" value="PDZ"/>
    <property type="match status" value="1"/>
</dbReference>
<dbReference type="PRINTS" id="PR01760">
    <property type="entry name" value="DISHEVELLED"/>
</dbReference>
<dbReference type="PRINTS" id="PR01761">
    <property type="entry name" value="DISHEVELLED1"/>
</dbReference>
<dbReference type="SMART" id="SM00021">
    <property type="entry name" value="DAX"/>
    <property type="match status" value="1"/>
</dbReference>
<dbReference type="SMART" id="SM00049">
    <property type="entry name" value="DEP"/>
    <property type="match status" value="1"/>
</dbReference>
<dbReference type="SMART" id="SM00228">
    <property type="entry name" value="PDZ"/>
    <property type="match status" value="1"/>
</dbReference>
<dbReference type="SUPFAM" id="SSF50156">
    <property type="entry name" value="PDZ domain-like"/>
    <property type="match status" value="1"/>
</dbReference>
<dbReference type="SUPFAM" id="SSF54236">
    <property type="entry name" value="Ubiquitin-like"/>
    <property type="match status" value="1"/>
</dbReference>
<dbReference type="SUPFAM" id="SSF46785">
    <property type="entry name" value="Winged helix' DNA-binding domain"/>
    <property type="match status" value="1"/>
</dbReference>
<dbReference type="PROSITE" id="PS50186">
    <property type="entry name" value="DEP"/>
    <property type="match status" value="1"/>
</dbReference>
<dbReference type="PROSITE" id="PS50841">
    <property type="entry name" value="DIX"/>
    <property type="match status" value="1"/>
</dbReference>
<dbReference type="PROSITE" id="PS50106">
    <property type="entry name" value="PDZ"/>
    <property type="match status" value="1"/>
</dbReference>
<organism>
    <name type="scientific">Xenopus laevis</name>
    <name type="common">African clawed frog</name>
    <dbReference type="NCBI Taxonomy" id="8355"/>
    <lineage>
        <taxon>Eukaryota</taxon>
        <taxon>Metazoa</taxon>
        <taxon>Chordata</taxon>
        <taxon>Craniata</taxon>
        <taxon>Vertebrata</taxon>
        <taxon>Euteleostomi</taxon>
        <taxon>Amphibia</taxon>
        <taxon>Batrachia</taxon>
        <taxon>Anura</taxon>
        <taxon>Pipoidea</taxon>
        <taxon>Pipidae</taxon>
        <taxon>Xenopodinae</taxon>
        <taxon>Xenopus</taxon>
        <taxon>Xenopus</taxon>
    </lineage>
</organism>
<gene>
    <name evidence="3" type="primary">dvl3</name>
</gene>
<keyword id="KW-0970">Cilium biogenesis/degradation</keyword>
<keyword id="KW-0963">Cytoplasm</keyword>
<keyword id="KW-0217">Developmental protein</keyword>
<keyword id="KW-1185">Reference proteome</keyword>
<keyword id="KW-0879">Wnt signaling pathway</keyword>
<proteinExistence type="evidence at transcript level"/>
<protein>
    <recommendedName>
        <fullName evidence="3">Segment polarity protein dishevelled homolog DVL-3</fullName>
        <shortName evidence="3">Dishevelled-3</shortName>
    </recommendedName>
    <alternativeName>
        <fullName>DSH homolog 3</fullName>
    </alternativeName>
</protein>
<name>DVL3_XENLA</name>
<evidence type="ECO:0000250" key="1">
    <source>
        <dbReference type="UniProtKB" id="O14641"/>
    </source>
</evidence>
<evidence type="ECO:0000250" key="2">
    <source>
        <dbReference type="UniProtKB" id="Q61062"/>
    </source>
</evidence>
<evidence type="ECO:0000250" key="3">
    <source>
        <dbReference type="UniProtKB" id="Q92997"/>
    </source>
</evidence>
<evidence type="ECO:0000255" key="4"/>
<evidence type="ECO:0000255" key="5">
    <source>
        <dbReference type="PROSITE-ProRule" id="PRU00066"/>
    </source>
</evidence>
<evidence type="ECO:0000255" key="6">
    <source>
        <dbReference type="PROSITE-ProRule" id="PRU00069"/>
    </source>
</evidence>
<evidence type="ECO:0000255" key="7">
    <source>
        <dbReference type="PROSITE-ProRule" id="PRU00143"/>
    </source>
</evidence>
<evidence type="ECO:0000256" key="8">
    <source>
        <dbReference type="SAM" id="MobiDB-lite"/>
    </source>
</evidence>
<evidence type="ECO:0000269" key="9">
    <source>
    </source>
</evidence>
<evidence type="ECO:0000305" key="10"/>
<evidence type="ECO:0000312" key="11">
    <source>
        <dbReference type="EMBL" id="AAH74187.1"/>
    </source>
</evidence>